<accession>Q0KCT8</accession>
<comment type="function">
    <text evidence="1">Catalyzes the condensation of the acetyl group of acetyl-CoA with 3-methyl-2-oxobutanoate (2-ketoisovalerate) to form 3-carboxy-3-hydroxy-4-methylpentanoate (2-isopropylmalate).</text>
</comment>
<comment type="catalytic activity">
    <reaction evidence="1">
        <text>3-methyl-2-oxobutanoate + acetyl-CoA + H2O = (2S)-2-isopropylmalate + CoA + H(+)</text>
        <dbReference type="Rhea" id="RHEA:21524"/>
        <dbReference type="ChEBI" id="CHEBI:1178"/>
        <dbReference type="ChEBI" id="CHEBI:11851"/>
        <dbReference type="ChEBI" id="CHEBI:15377"/>
        <dbReference type="ChEBI" id="CHEBI:15378"/>
        <dbReference type="ChEBI" id="CHEBI:57287"/>
        <dbReference type="ChEBI" id="CHEBI:57288"/>
        <dbReference type="EC" id="2.3.3.13"/>
    </reaction>
</comment>
<comment type="cofactor">
    <cofactor evidence="1">
        <name>Mn(2+)</name>
        <dbReference type="ChEBI" id="CHEBI:29035"/>
    </cofactor>
</comment>
<comment type="pathway">
    <text evidence="1">Amino-acid biosynthesis; L-leucine biosynthesis; L-leucine from 3-methyl-2-oxobutanoate: step 1/4.</text>
</comment>
<comment type="subunit">
    <text evidence="1">Homodimer.</text>
</comment>
<comment type="subcellular location">
    <subcellularLocation>
        <location evidence="1">Cytoplasm</location>
    </subcellularLocation>
</comment>
<comment type="similarity">
    <text evidence="1">Belongs to the alpha-IPM synthase/homocitrate synthase family. LeuA type 1 subfamily.</text>
</comment>
<protein>
    <recommendedName>
        <fullName evidence="1">2-isopropylmalate synthase</fullName>
        <ecNumber evidence="1">2.3.3.13</ecNumber>
    </recommendedName>
    <alternativeName>
        <fullName evidence="1">Alpha-IPM synthase</fullName>
    </alternativeName>
    <alternativeName>
        <fullName evidence="1">Alpha-isopropylmalate synthase</fullName>
    </alternativeName>
</protein>
<name>LEU1_CUPNH</name>
<reference key="1">
    <citation type="journal article" date="2006" name="Nat. Biotechnol.">
        <title>Genome sequence of the bioplastic-producing 'Knallgas' bacterium Ralstonia eutropha H16.</title>
        <authorList>
            <person name="Pohlmann A."/>
            <person name="Fricke W.F."/>
            <person name="Reinecke F."/>
            <person name="Kusian B."/>
            <person name="Liesegang H."/>
            <person name="Cramm R."/>
            <person name="Eitinger T."/>
            <person name="Ewering C."/>
            <person name="Poetter M."/>
            <person name="Schwartz E."/>
            <person name="Strittmatter A."/>
            <person name="Voss I."/>
            <person name="Gottschalk G."/>
            <person name="Steinbuechel A."/>
            <person name="Friedrich B."/>
            <person name="Bowien B."/>
        </authorList>
    </citation>
    <scope>NUCLEOTIDE SEQUENCE [LARGE SCALE GENOMIC DNA]</scope>
    <source>
        <strain>ATCC 17699 / DSM 428 / KCTC 22496 / NCIMB 10442 / H16 / Stanier 337</strain>
    </source>
</reference>
<dbReference type="EC" id="2.3.3.13" evidence="1"/>
<dbReference type="EMBL" id="AM260479">
    <property type="protein sequence ID" value="CAJ92183.1"/>
    <property type="molecule type" value="Genomic_DNA"/>
</dbReference>
<dbReference type="RefSeq" id="WP_010809139.1">
    <property type="nucleotide sequence ID" value="NZ_CP039287.1"/>
</dbReference>
<dbReference type="SMR" id="Q0KCT8"/>
<dbReference type="STRING" id="381666.H16_A1041"/>
<dbReference type="KEGG" id="reh:H16_A1041"/>
<dbReference type="eggNOG" id="COG0119">
    <property type="taxonomic scope" value="Bacteria"/>
</dbReference>
<dbReference type="HOGENOM" id="CLU_022158_0_1_4"/>
<dbReference type="OrthoDB" id="9803573at2"/>
<dbReference type="UniPathway" id="UPA00048">
    <property type="reaction ID" value="UER00070"/>
</dbReference>
<dbReference type="Proteomes" id="UP000008210">
    <property type="component" value="Chromosome 1"/>
</dbReference>
<dbReference type="GO" id="GO:0005829">
    <property type="term" value="C:cytosol"/>
    <property type="evidence" value="ECO:0007669"/>
    <property type="project" value="TreeGrafter"/>
</dbReference>
<dbReference type="GO" id="GO:0003852">
    <property type="term" value="F:2-isopropylmalate synthase activity"/>
    <property type="evidence" value="ECO:0007669"/>
    <property type="project" value="UniProtKB-UniRule"/>
</dbReference>
<dbReference type="GO" id="GO:0003985">
    <property type="term" value="F:acetyl-CoA C-acetyltransferase activity"/>
    <property type="evidence" value="ECO:0007669"/>
    <property type="project" value="UniProtKB-UniRule"/>
</dbReference>
<dbReference type="GO" id="GO:0030145">
    <property type="term" value="F:manganese ion binding"/>
    <property type="evidence" value="ECO:0007669"/>
    <property type="project" value="UniProtKB-UniRule"/>
</dbReference>
<dbReference type="GO" id="GO:0009098">
    <property type="term" value="P:L-leucine biosynthetic process"/>
    <property type="evidence" value="ECO:0007669"/>
    <property type="project" value="UniProtKB-UniRule"/>
</dbReference>
<dbReference type="CDD" id="cd07940">
    <property type="entry name" value="DRE_TIM_IPMS"/>
    <property type="match status" value="1"/>
</dbReference>
<dbReference type="FunFam" id="1.10.238.260:FF:000001">
    <property type="entry name" value="2-isopropylmalate synthase"/>
    <property type="match status" value="1"/>
</dbReference>
<dbReference type="FunFam" id="3.20.20.70:FF:000010">
    <property type="entry name" value="2-isopropylmalate synthase"/>
    <property type="match status" value="1"/>
</dbReference>
<dbReference type="FunFam" id="3.30.160.270:FF:000003">
    <property type="entry name" value="2-isopropylmalate synthase"/>
    <property type="match status" value="1"/>
</dbReference>
<dbReference type="Gene3D" id="1.10.238.260">
    <property type="match status" value="1"/>
</dbReference>
<dbReference type="Gene3D" id="3.30.160.270">
    <property type="match status" value="1"/>
</dbReference>
<dbReference type="Gene3D" id="3.20.20.70">
    <property type="entry name" value="Aldolase class I"/>
    <property type="match status" value="1"/>
</dbReference>
<dbReference type="HAMAP" id="MF_01025">
    <property type="entry name" value="LeuA_type1"/>
    <property type="match status" value="1"/>
</dbReference>
<dbReference type="InterPro" id="IPR050073">
    <property type="entry name" value="2-IPM_HCS-like"/>
</dbReference>
<dbReference type="InterPro" id="IPR013709">
    <property type="entry name" value="2-isopropylmalate_synth_dimer"/>
</dbReference>
<dbReference type="InterPro" id="IPR002034">
    <property type="entry name" value="AIPM/Hcit_synth_CS"/>
</dbReference>
<dbReference type="InterPro" id="IPR013785">
    <property type="entry name" value="Aldolase_TIM"/>
</dbReference>
<dbReference type="InterPro" id="IPR054691">
    <property type="entry name" value="LeuA/HCS_post-cat"/>
</dbReference>
<dbReference type="InterPro" id="IPR036230">
    <property type="entry name" value="LeuA_allosteric_dom_sf"/>
</dbReference>
<dbReference type="InterPro" id="IPR005671">
    <property type="entry name" value="LeuA_bact_synth"/>
</dbReference>
<dbReference type="InterPro" id="IPR000891">
    <property type="entry name" value="PYR_CT"/>
</dbReference>
<dbReference type="NCBIfam" id="TIGR00973">
    <property type="entry name" value="leuA_bact"/>
    <property type="match status" value="1"/>
</dbReference>
<dbReference type="NCBIfam" id="NF002086">
    <property type="entry name" value="PRK00915.1-3"/>
    <property type="match status" value="1"/>
</dbReference>
<dbReference type="NCBIfam" id="NF002087">
    <property type="entry name" value="PRK00915.1-4"/>
    <property type="match status" value="1"/>
</dbReference>
<dbReference type="PANTHER" id="PTHR10277:SF9">
    <property type="entry name" value="2-ISOPROPYLMALATE SYNTHASE 1, CHLOROPLASTIC-RELATED"/>
    <property type="match status" value="1"/>
</dbReference>
<dbReference type="PANTHER" id="PTHR10277">
    <property type="entry name" value="HOMOCITRATE SYNTHASE-RELATED"/>
    <property type="match status" value="1"/>
</dbReference>
<dbReference type="Pfam" id="PF22617">
    <property type="entry name" value="HCS_D2"/>
    <property type="match status" value="1"/>
</dbReference>
<dbReference type="Pfam" id="PF00682">
    <property type="entry name" value="HMGL-like"/>
    <property type="match status" value="1"/>
</dbReference>
<dbReference type="Pfam" id="PF08502">
    <property type="entry name" value="LeuA_dimer"/>
    <property type="match status" value="1"/>
</dbReference>
<dbReference type="SMART" id="SM00917">
    <property type="entry name" value="LeuA_dimer"/>
    <property type="match status" value="1"/>
</dbReference>
<dbReference type="SUPFAM" id="SSF110921">
    <property type="entry name" value="2-isopropylmalate synthase LeuA, allosteric (dimerisation) domain"/>
    <property type="match status" value="1"/>
</dbReference>
<dbReference type="SUPFAM" id="SSF51569">
    <property type="entry name" value="Aldolase"/>
    <property type="match status" value="1"/>
</dbReference>
<dbReference type="PROSITE" id="PS00815">
    <property type="entry name" value="AIPM_HOMOCIT_SYNTH_1"/>
    <property type="match status" value="1"/>
</dbReference>
<dbReference type="PROSITE" id="PS00816">
    <property type="entry name" value="AIPM_HOMOCIT_SYNTH_2"/>
    <property type="match status" value="1"/>
</dbReference>
<dbReference type="PROSITE" id="PS50991">
    <property type="entry name" value="PYR_CT"/>
    <property type="match status" value="1"/>
</dbReference>
<sequence>MSDKLIIFDTTLRDGEQSPGASMTREEKIRIARQLERLKVDVIEAGFAASSNGDFEAIRSIAQVVKDSTICSLARANDKDIARAAEALKPANSFRIHTFIATSALHMEKKLRMTPDEVYQQARLAVRFARQFTDDIEFSPEDGSRSDMDFLCRVLEGVIAEGATTINLPDTVGYAVPEGYAELIRSVRERIPNSDKAIWSVHCHNDLGMAVANSLAAVKMAGARQIECTINGLGERAGNTSLEEVVMAVKTRRDYFDLDIGVDTTQIVPASKLVSQITGFVVQPNKAVVGANAFAHASGIHQDGVLKARDTYEIMRAEDVGWSANKIVLGKLSGRNAFKQRLQELGIELESETEVNAAFTRFKELADQKAEIFDEDIVAIVSNEAQHDANEHFRFISLSQRSETGERPHARVVFSMDGQEQSGEGEGNGPVDATLHAIESRVSSGAEMVLYSVNAITGGTEAQGEVTVRLSKAGRIVNGVGTDPDIVAASAKAYLAALNKLHDKAVQKINPQI</sequence>
<feature type="chain" id="PRO_1000149252" description="2-isopropylmalate synthase">
    <location>
        <begin position="1"/>
        <end position="513"/>
    </location>
</feature>
<feature type="domain" description="Pyruvate carboxyltransferase" evidence="1">
    <location>
        <begin position="5"/>
        <end position="268"/>
    </location>
</feature>
<feature type="region of interest" description="Regulatory domain" evidence="1">
    <location>
        <begin position="394"/>
        <end position="513"/>
    </location>
</feature>
<feature type="binding site" evidence="1">
    <location>
        <position position="14"/>
    </location>
    <ligand>
        <name>Mn(2+)</name>
        <dbReference type="ChEBI" id="CHEBI:29035"/>
    </ligand>
</feature>
<feature type="binding site" evidence="1">
    <location>
        <position position="202"/>
    </location>
    <ligand>
        <name>Mn(2+)</name>
        <dbReference type="ChEBI" id="CHEBI:29035"/>
    </ligand>
</feature>
<feature type="binding site" evidence="1">
    <location>
        <position position="204"/>
    </location>
    <ligand>
        <name>Mn(2+)</name>
        <dbReference type="ChEBI" id="CHEBI:29035"/>
    </ligand>
</feature>
<feature type="binding site" evidence="1">
    <location>
        <position position="239"/>
    </location>
    <ligand>
        <name>Mn(2+)</name>
        <dbReference type="ChEBI" id="CHEBI:29035"/>
    </ligand>
</feature>
<organism>
    <name type="scientific">Cupriavidus necator (strain ATCC 17699 / DSM 428 / KCTC 22496 / NCIMB 10442 / H16 / Stanier 337)</name>
    <name type="common">Ralstonia eutropha</name>
    <dbReference type="NCBI Taxonomy" id="381666"/>
    <lineage>
        <taxon>Bacteria</taxon>
        <taxon>Pseudomonadati</taxon>
        <taxon>Pseudomonadota</taxon>
        <taxon>Betaproteobacteria</taxon>
        <taxon>Burkholderiales</taxon>
        <taxon>Burkholderiaceae</taxon>
        <taxon>Cupriavidus</taxon>
    </lineage>
</organism>
<gene>
    <name evidence="1" type="primary">leuA</name>
    <name type="ordered locus">H16_A1041</name>
</gene>
<evidence type="ECO:0000255" key="1">
    <source>
        <dbReference type="HAMAP-Rule" id="MF_01025"/>
    </source>
</evidence>
<keyword id="KW-0028">Amino-acid biosynthesis</keyword>
<keyword id="KW-0100">Branched-chain amino acid biosynthesis</keyword>
<keyword id="KW-0963">Cytoplasm</keyword>
<keyword id="KW-0432">Leucine biosynthesis</keyword>
<keyword id="KW-0464">Manganese</keyword>
<keyword id="KW-0479">Metal-binding</keyword>
<keyword id="KW-1185">Reference proteome</keyword>
<keyword id="KW-0808">Transferase</keyword>
<proteinExistence type="inferred from homology"/>